<accession>Q39BU7</accession>
<name>HTPX_BURL3</name>
<dbReference type="EC" id="3.4.24.-" evidence="1"/>
<dbReference type="EMBL" id="CP000151">
    <property type="protein sequence ID" value="ABB10069.1"/>
    <property type="molecule type" value="Genomic_DNA"/>
</dbReference>
<dbReference type="RefSeq" id="WP_011353570.1">
    <property type="nucleotide sequence ID" value="NZ_WNDV01000015.1"/>
</dbReference>
<dbReference type="GeneID" id="93193796"/>
<dbReference type="KEGG" id="bur:Bcep18194_A6475"/>
<dbReference type="PATRIC" id="fig|482957.22.peg.3507"/>
<dbReference type="HOGENOM" id="CLU_042266_3_0_4"/>
<dbReference type="Proteomes" id="UP000002705">
    <property type="component" value="Chromosome 1"/>
</dbReference>
<dbReference type="GO" id="GO:0005886">
    <property type="term" value="C:plasma membrane"/>
    <property type="evidence" value="ECO:0007669"/>
    <property type="project" value="UniProtKB-SubCell"/>
</dbReference>
<dbReference type="GO" id="GO:0004222">
    <property type="term" value="F:metalloendopeptidase activity"/>
    <property type="evidence" value="ECO:0007669"/>
    <property type="project" value="UniProtKB-UniRule"/>
</dbReference>
<dbReference type="GO" id="GO:0008270">
    <property type="term" value="F:zinc ion binding"/>
    <property type="evidence" value="ECO:0007669"/>
    <property type="project" value="UniProtKB-UniRule"/>
</dbReference>
<dbReference type="GO" id="GO:0006508">
    <property type="term" value="P:proteolysis"/>
    <property type="evidence" value="ECO:0007669"/>
    <property type="project" value="UniProtKB-KW"/>
</dbReference>
<dbReference type="CDD" id="cd07336">
    <property type="entry name" value="M48B_HtpX_like"/>
    <property type="match status" value="1"/>
</dbReference>
<dbReference type="Gene3D" id="3.30.2010.10">
    <property type="entry name" value="Metalloproteases ('zincins'), catalytic domain"/>
    <property type="match status" value="1"/>
</dbReference>
<dbReference type="HAMAP" id="MF_00188">
    <property type="entry name" value="Pept_M48_protease_HtpX"/>
    <property type="match status" value="1"/>
</dbReference>
<dbReference type="InterPro" id="IPR050083">
    <property type="entry name" value="HtpX_protease"/>
</dbReference>
<dbReference type="InterPro" id="IPR022919">
    <property type="entry name" value="Pept_M48_protease_HtpX"/>
</dbReference>
<dbReference type="InterPro" id="IPR001915">
    <property type="entry name" value="Peptidase_M48"/>
</dbReference>
<dbReference type="NCBIfam" id="NF002363">
    <property type="entry name" value="PRK01345.1"/>
    <property type="match status" value="1"/>
</dbReference>
<dbReference type="NCBIfam" id="NF002826">
    <property type="entry name" value="PRK03001.1"/>
    <property type="match status" value="1"/>
</dbReference>
<dbReference type="PANTHER" id="PTHR43221">
    <property type="entry name" value="PROTEASE HTPX"/>
    <property type="match status" value="1"/>
</dbReference>
<dbReference type="PANTHER" id="PTHR43221:SF1">
    <property type="entry name" value="PROTEASE HTPX"/>
    <property type="match status" value="1"/>
</dbReference>
<dbReference type="Pfam" id="PF01435">
    <property type="entry name" value="Peptidase_M48"/>
    <property type="match status" value="1"/>
</dbReference>
<gene>
    <name evidence="1" type="primary">htpX</name>
    <name type="ordered locus">Bcep18194_A6475</name>
</gene>
<proteinExistence type="inferred from homology"/>
<sequence>MFNWVKTAMLMAAITALFIVIGGMIGGSRGMTIALLFALGMNFFSYWFSDKMVLRMYNAQEVDENTAPQFYRMVRELATRANLPMPRVYLINEDAPNAFATGRNPEHAAVAATTGILRVLSEREMRGVMAHELAHVKHRDILISTITATMAGAISAIANFAMFFGGRDENGRPANPIAGIAVALLAPIAGALIQMAISRAREFEADRGGAQISGDPQSLATALDKIHRYAAGIPFQAAEQHPATAQMMIMNPLHGGGLQNLFSTHPATEERIARLMEMARTGRFD</sequence>
<protein>
    <recommendedName>
        <fullName evidence="1">Protease HtpX homolog</fullName>
        <ecNumber evidence="1">3.4.24.-</ecNumber>
    </recommendedName>
</protein>
<reference key="1">
    <citation type="submission" date="2005-10" db="EMBL/GenBank/DDBJ databases">
        <title>Complete sequence of chromosome 1 of Burkholderia sp. 383.</title>
        <authorList>
            <consortium name="US DOE Joint Genome Institute"/>
            <person name="Copeland A."/>
            <person name="Lucas S."/>
            <person name="Lapidus A."/>
            <person name="Barry K."/>
            <person name="Detter J.C."/>
            <person name="Glavina T."/>
            <person name="Hammon N."/>
            <person name="Israni S."/>
            <person name="Pitluck S."/>
            <person name="Chain P."/>
            <person name="Malfatti S."/>
            <person name="Shin M."/>
            <person name="Vergez L."/>
            <person name="Schmutz J."/>
            <person name="Larimer F."/>
            <person name="Land M."/>
            <person name="Kyrpides N."/>
            <person name="Lykidis A."/>
            <person name="Richardson P."/>
        </authorList>
    </citation>
    <scope>NUCLEOTIDE SEQUENCE [LARGE SCALE GENOMIC DNA]</scope>
    <source>
        <strain>ATCC 17760 / DSM 23089 / LMG 22485 / NCIMB 9086 / R18194 / 383</strain>
    </source>
</reference>
<evidence type="ECO:0000255" key="1">
    <source>
        <dbReference type="HAMAP-Rule" id="MF_00188"/>
    </source>
</evidence>
<organism>
    <name type="scientific">Burkholderia lata (strain ATCC 17760 / DSM 23089 / LMG 22485 / NCIMB 9086 / R18194 / 383)</name>
    <dbReference type="NCBI Taxonomy" id="482957"/>
    <lineage>
        <taxon>Bacteria</taxon>
        <taxon>Pseudomonadati</taxon>
        <taxon>Pseudomonadota</taxon>
        <taxon>Betaproteobacteria</taxon>
        <taxon>Burkholderiales</taxon>
        <taxon>Burkholderiaceae</taxon>
        <taxon>Burkholderia</taxon>
        <taxon>Burkholderia cepacia complex</taxon>
    </lineage>
</organism>
<keyword id="KW-0997">Cell inner membrane</keyword>
<keyword id="KW-1003">Cell membrane</keyword>
<keyword id="KW-0378">Hydrolase</keyword>
<keyword id="KW-0472">Membrane</keyword>
<keyword id="KW-0479">Metal-binding</keyword>
<keyword id="KW-0482">Metalloprotease</keyword>
<keyword id="KW-0645">Protease</keyword>
<keyword id="KW-0812">Transmembrane</keyword>
<keyword id="KW-1133">Transmembrane helix</keyword>
<keyword id="KW-0862">Zinc</keyword>
<comment type="cofactor">
    <cofactor evidence="1">
        <name>Zn(2+)</name>
        <dbReference type="ChEBI" id="CHEBI:29105"/>
    </cofactor>
    <text evidence="1">Binds 1 zinc ion per subunit.</text>
</comment>
<comment type="subcellular location">
    <subcellularLocation>
        <location evidence="1">Cell inner membrane</location>
        <topology evidence="1">Multi-pass membrane protein</topology>
    </subcellularLocation>
</comment>
<comment type="similarity">
    <text evidence="1">Belongs to the peptidase M48B family.</text>
</comment>
<feature type="chain" id="PRO_1000077459" description="Protease HtpX homolog">
    <location>
        <begin position="1"/>
        <end position="285"/>
    </location>
</feature>
<feature type="transmembrane region" description="Helical" evidence="1">
    <location>
        <begin position="7"/>
        <end position="27"/>
    </location>
</feature>
<feature type="transmembrane region" description="Helical" evidence="1">
    <location>
        <begin position="30"/>
        <end position="50"/>
    </location>
</feature>
<feature type="transmembrane region" description="Helical" evidence="1">
    <location>
        <begin position="146"/>
        <end position="166"/>
    </location>
</feature>
<feature type="transmembrane region" description="Helical" evidence="1">
    <location>
        <begin position="177"/>
        <end position="197"/>
    </location>
</feature>
<feature type="active site" evidence="1">
    <location>
        <position position="132"/>
    </location>
</feature>
<feature type="binding site" evidence="1">
    <location>
        <position position="131"/>
    </location>
    <ligand>
        <name>Zn(2+)</name>
        <dbReference type="ChEBI" id="CHEBI:29105"/>
        <note>catalytic</note>
    </ligand>
</feature>
<feature type="binding site" evidence="1">
    <location>
        <position position="135"/>
    </location>
    <ligand>
        <name>Zn(2+)</name>
        <dbReference type="ChEBI" id="CHEBI:29105"/>
        <note>catalytic</note>
    </ligand>
</feature>
<feature type="binding site" evidence="1">
    <location>
        <position position="202"/>
    </location>
    <ligand>
        <name>Zn(2+)</name>
        <dbReference type="ChEBI" id="CHEBI:29105"/>
        <note>catalytic</note>
    </ligand>
</feature>